<comment type="function">
    <text evidence="4">Orphan receptor activated by a subset of RFamide-family neuropeptides such as FLRF-amide and FMRF-amide. Mediates its action by association with G proteins that activate a phosphatidylinositol-calcium second messenger system. Its effect is mediated by G(q) and G(11) proteins. May regulate the function of nociceptive neurons by modulation of pain perception.</text>
</comment>
<comment type="subcellular location">
    <subcellularLocation>
        <location evidence="3">Cell membrane</location>
        <topology evidence="3">Multi-pass membrane protein</topology>
    </subcellularLocation>
</comment>
<comment type="tissue specificity">
    <text evidence="3">Expressed in a subset of sensory neurons that includes nociceptors. Expressed in the subclass of non-peptidergic sensory neurons that are IB4(+) and VR1(-).</text>
</comment>
<comment type="similarity">
    <text evidence="2">Belongs to the G-protein coupled receptor 1 family. Mas subfamily.</text>
</comment>
<reference key="1">
    <citation type="journal article" date="2001" name="Cell">
        <title>A diverse family of GPCRs expressed in specific subsets of nociceptive sensory neurons.</title>
        <authorList>
            <person name="Dong X."/>
            <person name="Han S.-K."/>
            <person name="Zylka M.J."/>
            <person name="Simon M.I."/>
            <person name="Anderson D.J."/>
        </authorList>
    </citation>
    <scope>NUCLEOTIDE SEQUENCE [MRNA]</scope>
    <scope>SUBCELLULAR LOCATION</scope>
    <scope>TISSUE SPECIFICITY</scope>
    <source>
        <strain>C57BL/6J</strain>
        <tissue>Spinal ganglion</tissue>
    </source>
</reference>
<reference key="2">
    <citation type="journal article" date="2004" name="Genome Res.">
        <title>The status, quality, and expansion of the NIH full-length cDNA project: the Mammalian Gene Collection (MGC).</title>
        <authorList>
            <consortium name="The MGC Project Team"/>
        </authorList>
    </citation>
    <scope>NUCLEOTIDE SEQUENCE [LARGE SCALE MRNA]</scope>
</reference>
<reference key="3">
    <citation type="journal article" date="2002" name="Proc. Natl. Acad. Sci. U.S.A.">
        <title>Orphan G protein-coupled receptors MrgA1 and MrgC11 are distinctively activated by RF-amide-related peptides through the Galpha q/11 pathway.</title>
        <authorList>
            <person name="Han S.-K."/>
            <person name="Dong X."/>
            <person name="Hwang J.-I."/>
            <person name="Zylka M.J."/>
            <person name="Anderson D.J."/>
            <person name="Simon M.I."/>
        </authorList>
    </citation>
    <scope>FUNCTION</scope>
</reference>
<protein>
    <recommendedName>
        <fullName>Mas-related G-protein coupled receptor member A1</fullName>
    </recommendedName>
    <alternativeName>
        <fullName>RF-amide G-protein coupled receptor</fullName>
    </alternativeName>
</protein>
<name>MRGA1_MOUSE</name>
<accession>Q91WW5</accession>
<accession>A0JNS0</accession>
<feature type="chain" id="PRO_0000069747" description="Mas-related G-protein coupled receptor member A1">
    <location>
        <begin position="1"/>
        <end position="304"/>
    </location>
</feature>
<feature type="topological domain" description="Extracellular" evidence="1">
    <location>
        <begin position="1"/>
        <end position="17"/>
    </location>
</feature>
<feature type="transmembrane region" description="Helical; Name=1" evidence="1">
    <location>
        <begin position="18"/>
        <end position="38"/>
    </location>
</feature>
<feature type="topological domain" description="Cytoplasmic" evidence="1">
    <location>
        <begin position="39"/>
        <end position="53"/>
    </location>
</feature>
<feature type="transmembrane region" description="Helical; Name=2" evidence="1">
    <location>
        <begin position="54"/>
        <end position="74"/>
    </location>
</feature>
<feature type="topological domain" description="Extracellular" evidence="1">
    <location>
        <position position="75"/>
    </location>
</feature>
<feature type="transmembrane region" description="Helical; Name=3" evidence="1">
    <location>
        <begin position="76"/>
        <end position="96"/>
    </location>
</feature>
<feature type="topological domain" description="Cytoplasmic" evidence="1">
    <location>
        <begin position="97"/>
        <end position="131"/>
    </location>
</feature>
<feature type="transmembrane region" description="Helical; Name=4" evidence="1">
    <location>
        <begin position="132"/>
        <end position="152"/>
    </location>
</feature>
<feature type="topological domain" description="Extracellular" evidence="1">
    <location>
        <begin position="153"/>
        <end position="166"/>
    </location>
</feature>
<feature type="transmembrane region" description="Helical; Name=5" evidence="1">
    <location>
        <begin position="167"/>
        <end position="187"/>
    </location>
</feature>
<feature type="topological domain" description="Cytoplasmic" evidence="1">
    <location>
        <begin position="188"/>
        <end position="206"/>
    </location>
</feature>
<feature type="transmembrane region" description="Helical; Name=6" evidence="1">
    <location>
        <begin position="207"/>
        <end position="227"/>
    </location>
</feature>
<feature type="topological domain" description="Extracellular" evidence="1">
    <location>
        <begin position="228"/>
        <end position="243"/>
    </location>
</feature>
<feature type="transmembrane region" description="Helical; Name=7" evidence="1">
    <location>
        <begin position="244"/>
        <end position="264"/>
    </location>
</feature>
<feature type="topological domain" description="Cytoplasmic" evidence="1">
    <location>
        <begin position="265"/>
        <end position="304"/>
    </location>
</feature>
<feature type="glycosylation site" description="N-linked (GlcNAc...) asparagine" evidence="1">
    <location>
        <position position="10"/>
    </location>
</feature>
<feature type="sequence conflict" description="In Ref. 2; AAI26874." evidence="5" ref="2">
    <original>T</original>
    <variation>R</variation>
    <location>
        <position position="12"/>
    </location>
</feature>
<feature type="sequence conflict" description="In Ref. 2; AAI26874." evidence="5" ref="2">
    <original>G</original>
    <variation>A</variation>
    <location>
        <position position="32"/>
    </location>
</feature>
<feature type="sequence conflict" description="In Ref. 2; AAI26874." evidence="5" ref="2">
    <original>H</original>
    <variation>R</variation>
    <location>
        <position position="43"/>
    </location>
</feature>
<feature type="sequence conflict" description="In Ref. 2; AAI26874." evidence="5" ref="2">
    <original>T</original>
    <variation>I</variation>
    <location>
        <position position="88"/>
    </location>
</feature>
<feature type="sequence conflict" description="In Ref. 2; AAI26874." evidence="5" ref="2">
    <original>N</original>
    <variation>S</variation>
    <location>
        <position position="166"/>
    </location>
</feature>
<feature type="sequence conflict" description="In Ref. 2; AAI26874." evidence="5" ref="2">
    <original>A</original>
    <variation>S</variation>
    <location>
        <position position="189"/>
    </location>
</feature>
<feature type="sequence conflict" description="In Ref. 2; AAI26874." evidence="5" ref="2">
    <original>I</original>
    <variation>M</variation>
    <location>
        <position position="208"/>
    </location>
</feature>
<feature type="sequence conflict" description="In Ref. 2; AAI26874." evidence="5" ref="2">
    <original>I</original>
    <variation>N</variation>
    <location>
        <position position="293"/>
    </location>
</feature>
<evidence type="ECO:0000255" key="1"/>
<evidence type="ECO:0000255" key="2">
    <source>
        <dbReference type="PROSITE-ProRule" id="PRU00521"/>
    </source>
</evidence>
<evidence type="ECO:0000269" key="3">
    <source>
    </source>
</evidence>
<evidence type="ECO:0000269" key="4">
    <source>
    </source>
</evidence>
<evidence type="ECO:0000305" key="5"/>
<proteinExistence type="evidence at transcript level"/>
<organism>
    <name type="scientific">Mus musculus</name>
    <name type="common">Mouse</name>
    <dbReference type="NCBI Taxonomy" id="10090"/>
    <lineage>
        <taxon>Eukaryota</taxon>
        <taxon>Metazoa</taxon>
        <taxon>Chordata</taxon>
        <taxon>Craniata</taxon>
        <taxon>Vertebrata</taxon>
        <taxon>Euteleostomi</taxon>
        <taxon>Mammalia</taxon>
        <taxon>Eutheria</taxon>
        <taxon>Euarchontoglires</taxon>
        <taxon>Glires</taxon>
        <taxon>Rodentia</taxon>
        <taxon>Myomorpha</taxon>
        <taxon>Muroidea</taxon>
        <taxon>Muridae</taxon>
        <taxon>Murinae</taxon>
        <taxon>Mus</taxon>
        <taxon>Mus</taxon>
    </lineage>
</organism>
<gene>
    <name type="primary">Mrgpra1</name>
    <name type="synonym">Mrga1</name>
</gene>
<dbReference type="EMBL" id="AY042191">
    <property type="protein sequence ID" value="AAK91787.1"/>
    <property type="molecule type" value="mRNA"/>
</dbReference>
<dbReference type="EMBL" id="BC126873">
    <property type="protein sequence ID" value="AAI26874.1"/>
    <property type="molecule type" value="mRNA"/>
</dbReference>
<dbReference type="RefSeq" id="NP_694735.2">
    <property type="nucleotide sequence ID" value="NM_153095.2"/>
</dbReference>
<dbReference type="SMR" id="Q91WW5"/>
<dbReference type="FunCoup" id="Q91WW5">
    <property type="interactions" value="42"/>
</dbReference>
<dbReference type="STRING" id="10090.ENSMUSP00000129978"/>
<dbReference type="ChEMBL" id="CHEMBL4523413"/>
<dbReference type="GlyCosmos" id="Q91WW5">
    <property type="glycosylation" value="1 site, No reported glycans"/>
</dbReference>
<dbReference type="GlyGen" id="Q91WW5">
    <property type="glycosylation" value="1 site"/>
</dbReference>
<dbReference type="PaxDb" id="10090-ENSMUSP00000129978"/>
<dbReference type="DNASU" id="233221"/>
<dbReference type="GeneID" id="233221"/>
<dbReference type="KEGG" id="mmu:233221"/>
<dbReference type="AGR" id="MGI:3033095"/>
<dbReference type="CTD" id="233221"/>
<dbReference type="MGI" id="MGI:3033095">
    <property type="gene designation" value="Mrgpra1"/>
</dbReference>
<dbReference type="eggNOG" id="ENOG502RTWA">
    <property type="taxonomic scope" value="Eukaryota"/>
</dbReference>
<dbReference type="InParanoid" id="Q91WW5"/>
<dbReference type="OrthoDB" id="6091802at2759"/>
<dbReference type="PhylomeDB" id="Q91WW5"/>
<dbReference type="BioGRID-ORCS" id="233221">
    <property type="hits" value="2 hits in 76 CRISPR screens"/>
</dbReference>
<dbReference type="ChiTaRS" id="Mrgpra1">
    <property type="organism name" value="mouse"/>
</dbReference>
<dbReference type="PRO" id="PR:Q91WW5"/>
<dbReference type="Proteomes" id="UP000000589">
    <property type="component" value="Unplaced"/>
</dbReference>
<dbReference type="RNAct" id="Q91WW5">
    <property type="molecule type" value="protein"/>
</dbReference>
<dbReference type="GO" id="GO:0016020">
    <property type="term" value="C:membrane"/>
    <property type="evidence" value="ECO:0000314"/>
    <property type="project" value="MGI"/>
</dbReference>
<dbReference type="GO" id="GO:0005886">
    <property type="term" value="C:plasma membrane"/>
    <property type="evidence" value="ECO:0007669"/>
    <property type="project" value="UniProtKB-SubCell"/>
</dbReference>
<dbReference type="GO" id="GO:0005525">
    <property type="term" value="F:GTP binding"/>
    <property type="evidence" value="ECO:0000314"/>
    <property type="project" value="MGI"/>
</dbReference>
<dbReference type="GO" id="GO:0008188">
    <property type="term" value="F:neuropeptide receptor activity"/>
    <property type="evidence" value="ECO:0000314"/>
    <property type="project" value="MGI"/>
</dbReference>
<dbReference type="GO" id="GO:0031409">
    <property type="term" value="F:pigment binding"/>
    <property type="evidence" value="ECO:0000314"/>
    <property type="project" value="MGI"/>
</dbReference>
<dbReference type="GO" id="GO:1905237">
    <property type="term" value="P:response to cyclosporin A"/>
    <property type="evidence" value="ECO:0000315"/>
    <property type="project" value="MGI"/>
</dbReference>
<dbReference type="GO" id="GO:1901652">
    <property type="term" value="P:response to peptide"/>
    <property type="evidence" value="ECO:0000315"/>
    <property type="project" value="MGI"/>
</dbReference>
<dbReference type="GO" id="GO:0160025">
    <property type="term" value="P:sensory perception of itch"/>
    <property type="evidence" value="ECO:0000315"/>
    <property type="project" value="MGI"/>
</dbReference>
<dbReference type="CDD" id="cd15105">
    <property type="entry name" value="7tmA_MrgprA"/>
    <property type="match status" value="1"/>
</dbReference>
<dbReference type="FunFam" id="1.20.1070.10:FF:000140">
    <property type="entry name" value="Mas-related G-protein coupled receptor member X2"/>
    <property type="match status" value="1"/>
</dbReference>
<dbReference type="Gene3D" id="1.20.1070.10">
    <property type="entry name" value="Rhodopsin 7-helix transmembrane proteins"/>
    <property type="match status" value="1"/>
</dbReference>
<dbReference type="InterPro" id="IPR000276">
    <property type="entry name" value="GPCR_Rhodpsn"/>
</dbReference>
<dbReference type="InterPro" id="IPR017452">
    <property type="entry name" value="GPCR_Rhodpsn_7TM"/>
</dbReference>
<dbReference type="InterPro" id="IPR026233">
    <property type="entry name" value="MRGPCRA"/>
</dbReference>
<dbReference type="InterPro" id="IPR026234">
    <property type="entry name" value="MRGPCRFAMILY"/>
</dbReference>
<dbReference type="PANTHER" id="PTHR11334">
    <property type="entry name" value="MAS-RELATED G-PROTEIN COUPLED RECEPTOR"/>
    <property type="match status" value="1"/>
</dbReference>
<dbReference type="PANTHER" id="PTHR11334:SF33">
    <property type="entry name" value="MAS-RELATED GPR, MEMBER A2A-RELATED"/>
    <property type="match status" value="1"/>
</dbReference>
<dbReference type="Pfam" id="PF00001">
    <property type="entry name" value="7tm_1"/>
    <property type="match status" value="1"/>
</dbReference>
<dbReference type="PRINTS" id="PR00237">
    <property type="entry name" value="GPCRRHODOPSN"/>
</dbReference>
<dbReference type="PRINTS" id="PR02109">
    <property type="entry name" value="MRGPCRA"/>
</dbReference>
<dbReference type="PRINTS" id="PR02108">
    <property type="entry name" value="MRGPCRFAMILY"/>
</dbReference>
<dbReference type="SUPFAM" id="SSF81321">
    <property type="entry name" value="Family A G protein-coupled receptor-like"/>
    <property type="match status" value="1"/>
</dbReference>
<dbReference type="PROSITE" id="PS00237">
    <property type="entry name" value="G_PROTEIN_RECEP_F1_1"/>
    <property type="match status" value="1"/>
</dbReference>
<dbReference type="PROSITE" id="PS50262">
    <property type="entry name" value="G_PROTEIN_RECEP_F1_2"/>
    <property type="match status" value="1"/>
</dbReference>
<keyword id="KW-1003">Cell membrane</keyword>
<keyword id="KW-0297">G-protein coupled receptor</keyword>
<keyword id="KW-0325">Glycoprotein</keyword>
<keyword id="KW-0472">Membrane</keyword>
<keyword id="KW-0675">Receptor</keyword>
<keyword id="KW-1185">Reference proteome</keyword>
<keyword id="KW-0807">Transducer</keyword>
<keyword id="KW-0812">Transmembrane</keyword>
<keyword id="KW-1133">Transmembrane helix</keyword>
<sequence length="304" mass="34381">MDNTIPGGINITILIPNLMIIIFGLVGLTGNGIVFWLLGFCLHRNAFSVYILNLALADFFFLLGHIIDSILLLLNVFYPITFLLCFYTIMMVLYIAGLSMLSAISTERCLSVLCPIWYHCHRPEHTSTVMCAVIWVLSLLICILNSYFCGFLNTQYKNENGCLALNFFTAAYLMFLFVVLCLSSLALVARLFCGTGQIKLTRLYVTIILSILVFLLCGLPFGIHWFLLFKIKDDFHVFDLGFYLASVVLTAINSCANPIIYFFVGSFRHRLKHQTLKMVLQNALQDTPETAKIMVEMSRSKSEP</sequence>